<organism>
    <name type="scientific">Rhizobium meliloti (strain 1021)</name>
    <name type="common">Ensifer meliloti</name>
    <name type="synonym">Sinorhizobium meliloti</name>
    <dbReference type="NCBI Taxonomy" id="266834"/>
    <lineage>
        <taxon>Bacteria</taxon>
        <taxon>Pseudomonadati</taxon>
        <taxon>Pseudomonadota</taxon>
        <taxon>Alphaproteobacteria</taxon>
        <taxon>Hyphomicrobiales</taxon>
        <taxon>Rhizobiaceae</taxon>
        <taxon>Sinorhizobium/Ensifer group</taxon>
        <taxon>Sinorhizobium</taxon>
    </lineage>
</organism>
<dbReference type="EC" id="2.1.1.166" evidence="1"/>
<dbReference type="EMBL" id="AL591688">
    <property type="protein sequence ID" value="CAC45328.1"/>
    <property type="molecule type" value="Genomic_DNA"/>
</dbReference>
<dbReference type="RefSeq" id="NP_384862.1">
    <property type="nucleotide sequence ID" value="NC_003047.1"/>
</dbReference>
<dbReference type="RefSeq" id="WP_010968793.1">
    <property type="nucleotide sequence ID" value="NC_003047.1"/>
</dbReference>
<dbReference type="SMR" id="Q92RT9"/>
<dbReference type="EnsemblBacteria" id="CAC45328">
    <property type="protein sequence ID" value="CAC45328"/>
    <property type="gene ID" value="SMc00811"/>
</dbReference>
<dbReference type="KEGG" id="sme:SMc00811"/>
<dbReference type="PATRIC" id="fig|266834.11.peg.2140"/>
<dbReference type="eggNOG" id="COG0293">
    <property type="taxonomic scope" value="Bacteria"/>
</dbReference>
<dbReference type="HOGENOM" id="CLU_009422_4_0_5"/>
<dbReference type="OrthoDB" id="9790080at2"/>
<dbReference type="Proteomes" id="UP000001976">
    <property type="component" value="Chromosome"/>
</dbReference>
<dbReference type="GO" id="GO:0005737">
    <property type="term" value="C:cytoplasm"/>
    <property type="evidence" value="ECO:0007669"/>
    <property type="project" value="UniProtKB-SubCell"/>
</dbReference>
<dbReference type="GO" id="GO:0008650">
    <property type="term" value="F:rRNA (uridine-2'-O-)-methyltransferase activity"/>
    <property type="evidence" value="ECO:0007669"/>
    <property type="project" value="UniProtKB-UniRule"/>
</dbReference>
<dbReference type="CDD" id="cd02440">
    <property type="entry name" value="AdoMet_MTases"/>
    <property type="match status" value="1"/>
</dbReference>
<dbReference type="Gene3D" id="3.40.50.150">
    <property type="entry name" value="Vaccinia Virus protein VP39"/>
    <property type="match status" value="1"/>
</dbReference>
<dbReference type="HAMAP" id="MF_01547">
    <property type="entry name" value="RNA_methyltr_E"/>
    <property type="match status" value="1"/>
</dbReference>
<dbReference type="InterPro" id="IPR050082">
    <property type="entry name" value="RNA_methyltr_RlmE"/>
</dbReference>
<dbReference type="InterPro" id="IPR002877">
    <property type="entry name" value="RNA_MeTrfase_FtsJ_dom"/>
</dbReference>
<dbReference type="InterPro" id="IPR015507">
    <property type="entry name" value="rRNA-MeTfrase_E"/>
</dbReference>
<dbReference type="InterPro" id="IPR029063">
    <property type="entry name" value="SAM-dependent_MTases_sf"/>
</dbReference>
<dbReference type="PANTHER" id="PTHR10920">
    <property type="entry name" value="RIBOSOMAL RNA METHYLTRANSFERASE"/>
    <property type="match status" value="1"/>
</dbReference>
<dbReference type="PANTHER" id="PTHR10920:SF18">
    <property type="entry name" value="RRNA METHYLTRANSFERASE 2, MITOCHONDRIAL"/>
    <property type="match status" value="1"/>
</dbReference>
<dbReference type="Pfam" id="PF01728">
    <property type="entry name" value="FtsJ"/>
    <property type="match status" value="1"/>
</dbReference>
<dbReference type="PIRSF" id="PIRSF005461">
    <property type="entry name" value="23S_rRNA_mtase"/>
    <property type="match status" value="1"/>
</dbReference>
<dbReference type="SUPFAM" id="SSF53335">
    <property type="entry name" value="S-adenosyl-L-methionine-dependent methyltransferases"/>
    <property type="match status" value="1"/>
</dbReference>
<comment type="function">
    <text evidence="1">Specifically methylates the uridine in position 2552 of 23S rRNA at the 2'-O position of the ribose in the fully assembled 50S ribosomal subunit.</text>
</comment>
<comment type="catalytic activity">
    <reaction evidence="1">
        <text>uridine(2552) in 23S rRNA + S-adenosyl-L-methionine = 2'-O-methyluridine(2552) in 23S rRNA + S-adenosyl-L-homocysteine + H(+)</text>
        <dbReference type="Rhea" id="RHEA:42720"/>
        <dbReference type="Rhea" id="RHEA-COMP:10202"/>
        <dbReference type="Rhea" id="RHEA-COMP:10203"/>
        <dbReference type="ChEBI" id="CHEBI:15378"/>
        <dbReference type="ChEBI" id="CHEBI:57856"/>
        <dbReference type="ChEBI" id="CHEBI:59789"/>
        <dbReference type="ChEBI" id="CHEBI:65315"/>
        <dbReference type="ChEBI" id="CHEBI:74478"/>
        <dbReference type="EC" id="2.1.1.166"/>
    </reaction>
</comment>
<comment type="subcellular location">
    <subcellularLocation>
        <location evidence="1">Cytoplasm</location>
    </subcellularLocation>
</comment>
<comment type="similarity">
    <text evidence="1">Belongs to the class I-like SAM-binding methyltransferase superfamily. RNA methyltransferase RlmE family.</text>
</comment>
<name>RLME_RHIME</name>
<keyword id="KW-0963">Cytoplasm</keyword>
<keyword id="KW-0489">Methyltransferase</keyword>
<keyword id="KW-1185">Reference proteome</keyword>
<keyword id="KW-0698">rRNA processing</keyword>
<keyword id="KW-0949">S-adenosyl-L-methionine</keyword>
<keyword id="KW-0808">Transferase</keyword>
<sequence length="245" mass="26909">MTKSPIGGNRSGRKLGQKVKKGKLKASSRRWIERHINDPYVQRAQLEGYRARAAFKLLEIDEKHKILAGAKRIIDLGAAPGSWSQIAAKVTNSTDADPRVAAIDFLEMDPIPGVRFLQMDFLDPEAPENLKQAIGGAPDIVLSDMAAPTTGHRQTDHIRTMHLCEVAAHFAVEVLAEGGHFLAKTFQGGTERDLLNMLKQNFRQVVHVKPASSRAESVEMFLLAKGFKGRHALESDEPAEGAAEE</sequence>
<evidence type="ECO:0000255" key="1">
    <source>
        <dbReference type="HAMAP-Rule" id="MF_01547"/>
    </source>
</evidence>
<evidence type="ECO:0000256" key="2">
    <source>
        <dbReference type="SAM" id="MobiDB-lite"/>
    </source>
</evidence>
<protein>
    <recommendedName>
        <fullName evidence="1">Ribosomal RNA large subunit methyltransferase E</fullName>
        <ecNumber evidence="1">2.1.1.166</ecNumber>
    </recommendedName>
    <alternativeName>
        <fullName evidence="1">23S rRNA Um2552 methyltransferase</fullName>
    </alternativeName>
    <alternativeName>
        <fullName evidence="1">rRNA (uridine-2'-O-)-methyltransferase</fullName>
    </alternativeName>
</protein>
<reference key="1">
    <citation type="journal article" date="2001" name="Proc. Natl. Acad. Sci. U.S.A.">
        <title>Analysis of the chromosome sequence of the legume symbiont Sinorhizobium meliloti strain 1021.</title>
        <authorList>
            <person name="Capela D."/>
            <person name="Barloy-Hubler F."/>
            <person name="Gouzy J."/>
            <person name="Bothe G."/>
            <person name="Ampe F."/>
            <person name="Batut J."/>
            <person name="Boistard P."/>
            <person name="Becker A."/>
            <person name="Boutry M."/>
            <person name="Cadieu E."/>
            <person name="Dreano S."/>
            <person name="Gloux S."/>
            <person name="Godrie T."/>
            <person name="Goffeau A."/>
            <person name="Kahn D."/>
            <person name="Kiss E."/>
            <person name="Lelaure V."/>
            <person name="Masuy D."/>
            <person name="Pohl T."/>
            <person name="Portetelle D."/>
            <person name="Puehler A."/>
            <person name="Purnelle B."/>
            <person name="Ramsperger U."/>
            <person name="Renard C."/>
            <person name="Thebault P."/>
            <person name="Vandenbol M."/>
            <person name="Weidner S."/>
            <person name="Galibert F."/>
        </authorList>
    </citation>
    <scope>NUCLEOTIDE SEQUENCE [LARGE SCALE GENOMIC DNA]</scope>
    <source>
        <strain>1021</strain>
    </source>
</reference>
<reference key="2">
    <citation type="journal article" date="2001" name="Science">
        <title>The composite genome of the legume symbiont Sinorhizobium meliloti.</title>
        <authorList>
            <person name="Galibert F."/>
            <person name="Finan T.M."/>
            <person name="Long S.R."/>
            <person name="Puehler A."/>
            <person name="Abola P."/>
            <person name="Ampe F."/>
            <person name="Barloy-Hubler F."/>
            <person name="Barnett M.J."/>
            <person name="Becker A."/>
            <person name="Boistard P."/>
            <person name="Bothe G."/>
            <person name="Boutry M."/>
            <person name="Bowser L."/>
            <person name="Buhrmester J."/>
            <person name="Cadieu E."/>
            <person name="Capela D."/>
            <person name="Chain P."/>
            <person name="Cowie A."/>
            <person name="Davis R.W."/>
            <person name="Dreano S."/>
            <person name="Federspiel N.A."/>
            <person name="Fisher R.F."/>
            <person name="Gloux S."/>
            <person name="Godrie T."/>
            <person name="Goffeau A."/>
            <person name="Golding B."/>
            <person name="Gouzy J."/>
            <person name="Gurjal M."/>
            <person name="Hernandez-Lucas I."/>
            <person name="Hong A."/>
            <person name="Huizar L."/>
            <person name="Hyman R.W."/>
            <person name="Jones T."/>
            <person name="Kahn D."/>
            <person name="Kahn M.L."/>
            <person name="Kalman S."/>
            <person name="Keating D.H."/>
            <person name="Kiss E."/>
            <person name="Komp C."/>
            <person name="Lelaure V."/>
            <person name="Masuy D."/>
            <person name="Palm C."/>
            <person name="Peck M.C."/>
            <person name="Pohl T.M."/>
            <person name="Portetelle D."/>
            <person name="Purnelle B."/>
            <person name="Ramsperger U."/>
            <person name="Surzycki R."/>
            <person name="Thebault P."/>
            <person name="Vandenbol M."/>
            <person name="Vorhoelter F.J."/>
            <person name="Weidner S."/>
            <person name="Wells D.H."/>
            <person name="Wong K."/>
            <person name="Yeh K.-C."/>
            <person name="Batut J."/>
        </authorList>
    </citation>
    <scope>NUCLEOTIDE SEQUENCE [LARGE SCALE GENOMIC DNA]</scope>
    <source>
        <strain>1021</strain>
    </source>
</reference>
<gene>
    <name evidence="1" type="primary">rlmE</name>
    <name evidence="1" type="synonym">ftsJ</name>
    <name evidence="1" type="synonym">rrmJ</name>
    <name type="ordered locus">R00756</name>
    <name type="ORF">SMc00811</name>
</gene>
<proteinExistence type="inferred from homology"/>
<feature type="chain" id="PRO_0000155530" description="Ribosomal RNA large subunit methyltransferase E">
    <location>
        <begin position="1"/>
        <end position="245"/>
    </location>
</feature>
<feature type="region of interest" description="Disordered" evidence="2">
    <location>
        <begin position="1"/>
        <end position="25"/>
    </location>
</feature>
<feature type="compositionally biased region" description="Basic residues" evidence="2">
    <location>
        <begin position="11"/>
        <end position="25"/>
    </location>
</feature>
<feature type="active site" description="Proton acceptor" evidence="1">
    <location>
        <position position="184"/>
    </location>
</feature>
<feature type="binding site" evidence="1">
    <location>
        <position position="81"/>
    </location>
    <ligand>
        <name>S-adenosyl-L-methionine</name>
        <dbReference type="ChEBI" id="CHEBI:59789"/>
    </ligand>
</feature>
<feature type="binding site" evidence="1">
    <location>
        <position position="83"/>
    </location>
    <ligand>
        <name>S-adenosyl-L-methionine</name>
        <dbReference type="ChEBI" id="CHEBI:59789"/>
    </ligand>
</feature>
<feature type="binding site" evidence="1">
    <location>
        <position position="104"/>
    </location>
    <ligand>
        <name>S-adenosyl-L-methionine</name>
        <dbReference type="ChEBI" id="CHEBI:59789"/>
    </ligand>
</feature>
<feature type="binding site" evidence="1">
    <location>
        <position position="120"/>
    </location>
    <ligand>
        <name>S-adenosyl-L-methionine</name>
        <dbReference type="ChEBI" id="CHEBI:59789"/>
    </ligand>
</feature>
<feature type="binding site" evidence="1">
    <location>
        <position position="144"/>
    </location>
    <ligand>
        <name>S-adenosyl-L-methionine</name>
        <dbReference type="ChEBI" id="CHEBI:59789"/>
    </ligand>
</feature>
<accession>Q92RT9</accession>